<gene>
    <name evidence="1" type="primary">nnrE</name>
    <name type="ordered locus">CMM_1927</name>
</gene>
<dbReference type="EC" id="5.1.99.6" evidence="1"/>
<dbReference type="EMBL" id="AM711867">
    <property type="protein sequence ID" value="CAN01983.1"/>
    <property type="molecule type" value="Genomic_DNA"/>
</dbReference>
<dbReference type="RefSeq" id="WP_012038614.1">
    <property type="nucleotide sequence ID" value="NC_009480.1"/>
</dbReference>
<dbReference type="SMR" id="A5CSB9"/>
<dbReference type="KEGG" id="cmi:CMM_1927"/>
<dbReference type="eggNOG" id="COG0062">
    <property type="taxonomic scope" value="Bacteria"/>
</dbReference>
<dbReference type="HOGENOM" id="CLU_024853_0_2_11"/>
<dbReference type="OrthoDB" id="9806925at2"/>
<dbReference type="Proteomes" id="UP000001564">
    <property type="component" value="Chromosome"/>
</dbReference>
<dbReference type="GO" id="GO:0046872">
    <property type="term" value="F:metal ion binding"/>
    <property type="evidence" value="ECO:0007669"/>
    <property type="project" value="UniProtKB-KW"/>
</dbReference>
<dbReference type="GO" id="GO:0052856">
    <property type="term" value="F:NAD(P)HX epimerase activity"/>
    <property type="evidence" value="ECO:0007669"/>
    <property type="project" value="UniProtKB-UniRule"/>
</dbReference>
<dbReference type="GO" id="GO:0000166">
    <property type="term" value="F:nucleotide binding"/>
    <property type="evidence" value="ECO:0007669"/>
    <property type="project" value="UniProtKB-KW"/>
</dbReference>
<dbReference type="Gene3D" id="3.40.50.10260">
    <property type="entry name" value="YjeF N-terminal domain"/>
    <property type="match status" value="1"/>
</dbReference>
<dbReference type="HAMAP" id="MF_01966">
    <property type="entry name" value="NADHX_epimerase"/>
    <property type="match status" value="1"/>
</dbReference>
<dbReference type="InterPro" id="IPR004443">
    <property type="entry name" value="YjeF_N_dom"/>
</dbReference>
<dbReference type="InterPro" id="IPR036652">
    <property type="entry name" value="YjeF_N_dom_sf"/>
</dbReference>
<dbReference type="Pfam" id="PF03853">
    <property type="entry name" value="YjeF_N"/>
    <property type="match status" value="1"/>
</dbReference>
<dbReference type="SUPFAM" id="SSF64153">
    <property type="entry name" value="YjeF N-terminal domain-like"/>
    <property type="match status" value="1"/>
</dbReference>
<dbReference type="PROSITE" id="PS51385">
    <property type="entry name" value="YJEF_N"/>
    <property type="match status" value="1"/>
</dbReference>
<evidence type="ECO:0000255" key="1">
    <source>
        <dbReference type="HAMAP-Rule" id="MF_01966"/>
    </source>
</evidence>
<proteinExistence type="inferred from homology"/>
<organism>
    <name type="scientific">Clavibacter michiganensis subsp. michiganensis (strain NCPPB 382)</name>
    <dbReference type="NCBI Taxonomy" id="443906"/>
    <lineage>
        <taxon>Bacteria</taxon>
        <taxon>Bacillati</taxon>
        <taxon>Actinomycetota</taxon>
        <taxon>Actinomycetes</taxon>
        <taxon>Micrococcales</taxon>
        <taxon>Microbacteriaceae</taxon>
        <taxon>Clavibacter</taxon>
    </lineage>
</organism>
<accession>A5CSB9</accession>
<comment type="function">
    <text evidence="1">Catalyzes the epimerization of the S- and R-forms of NAD(P)HX, a damaged form of NAD(P)H that is a result of enzymatic or heat-dependent hydration. This is a prerequisite for the S-specific NAD(P)H-hydrate dehydratase to allow the repair of both epimers of NAD(P)HX.</text>
</comment>
<comment type="catalytic activity">
    <reaction evidence="1">
        <text>(6R)-NADHX = (6S)-NADHX</text>
        <dbReference type="Rhea" id="RHEA:32215"/>
        <dbReference type="ChEBI" id="CHEBI:64074"/>
        <dbReference type="ChEBI" id="CHEBI:64075"/>
        <dbReference type="EC" id="5.1.99.6"/>
    </reaction>
</comment>
<comment type="catalytic activity">
    <reaction evidence="1">
        <text>(6R)-NADPHX = (6S)-NADPHX</text>
        <dbReference type="Rhea" id="RHEA:32227"/>
        <dbReference type="ChEBI" id="CHEBI:64076"/>
        <dbReference type="ChEBI" id="CHEBI:64077"/>
        <dbReference type="EC" id="5.1.99.6"/>
    </reaction>
</comment>
<comment type="cofactor">
    <cofactor evidence="1">
        <name>K(+)</name>
        <dbReference type="ChEBI" id="CHEBI:29103"/>
    </cofactor>
    <text evidence="1">Binds 1 potassium ion per subunit.</text>
</comment>
<comment type="similarity">
    <text evidence="1">Belongs to the NnrE/AIBP family.</text>
</comment>
<keyword id="KW-0413">Isomerase</keyword>
<keyword id="KW-0479">Metal-binding</keyword>
<keyword id="KW-0520">NAD</keyword>
<keyword id="KW-0521">NADP</keyword>
<keyword id="KW-0547">Nucleotide-binding</keyword>
<keyword id="KW-0630">Potassium</keyword>
<reference key="1">
    <citation type="journal article" date="2008" name="J. Bacteriol.">
        <title>The genome sequence of the tomato-pathogenic actinomycete Clavibacter michiganensis subsp. michiganensis NCPPB382 reveals a large island involved in pathogenicity.</title>
        <authorList>
            <person name="Gartemann K.-H."/>
            <person name="Abt B."/>
            <person name="Bekel T."/>
            <person name="Burger A."/>
            <person name="Engemann J."/>
            <person name="Fluegel M."/>
            <person name="Gaigalat L."/>
            <person name="Goesmann A."/>
            <person name="Graefen I."/>
            <person name="Kalinowski J."/>
            <person name="Kaup O."/>
            <person name="Kirchner O."/>
            <person name="Krause L."/>
            <person name="Linke B."/>
            <person name="McHardy A."/>
            <person name="Meyer F."/>
            <person name="Pohle S."/>
            <person name="Rueckert C."/>
            <person name="Schneiker S."/>
            <person name="Zellermann E.-M."/>
            <person name="Puehler A."/>
            <person name="Eichenlaub R."/>
            <person name="Kaiser O."/>
            <person name="Bartels D."/>
        </authorList>
    </citation>
    <scope>NUCLEOTIDE SEQUENCE [LARGE SCALE GENOMIC DNA]</scope>
    <source>
        <strain>NCPPB 382</strain>
    </source>
</reference>
<name>NNRE_CLAM3</name>
<protein>
    <recommendedName>
        <fullName evidence="1">NAD(P)H-hydrate epimerase</fullName>
        <ecNumber evidence="1">5.1.99.6</ecNumber>
    </recommendedName>
    <alternativeName>
        <fullName evidence="1">NAD(P)HX epimerase</fullName>
    </alternativeName>
</protein>
<sequence>MSDPALIADGYAAADIRAAEAPLLAAGAQLMRVAAAGLARACRALAPDGPVLVLVGAGNNGGDALLAAAELAREGREVGVIRTAGRIHEAGAAQAVAAGVPITSADELDDATLADIARSSALVVDGILGIGTTDSPALRGEGRRVVAALLPVVTAEGGPAVIACDIPSGVGCDDGAVPDPAVLPADVTVTFGAGKAGLMQGPGRALAGRVELVDVGLDLSGATPLVRAAR</sequence>
<feature type="chain" id="PRO_0000416349" description="NAD(P)H-hydrate epimerase">
    <location>
        <begin position="1"/>
        <end position="230"/>
    </location>
</feature>
<feature type="domain" description="YjeF N-terminal" evidence="1">
    <location>
        <begin position="11"/>
        <end position="223"/>
    </location>
</feature>
<feature type="binding site" evidence="1">
    <location>
        <begin position="59"/>
        <end position="63"/>
    </location>
    <ligand>
        <name>(6S)-NADPHX</name>
        <dbReference type="ChEBI" id="CHEBI:64076"/>
    </ligand>
</feature>
<feature type="binding site" evidence="1">
    <location>
        <position position="60"/>
    </location>
    <ligand>
        <name>K(+)</name>
        <dbReference type="ChEBI" id="CHEBI:29103"/>
    </ligand>
</feature>
<feature type="binding site" evidence="1">
    <location>
        <position position="125"/>
    </location>
    <ligand>
        <name>K(+)</name>
        <dbReference type="ChEBI" id="CHEBI:29103"/>
    </ligand>
</feature>
<feature type="binding site" evidence="1">
    <location>
        <begin position="129"/>
        <end position="137"/>
    </location>
    <ligand>
        <name>(6S)-NADPHX</name>
        <dbReference type="ChEBI" id="CHEBI:64076"/>
    </ligand>
</feature>
<feature type="binding site" evidence="1">
    <location>
        <position position="165"/>
    </location>
    <ligand>
        <name>(6S)-NADPHX</name>
        <dbReference type="ChEBI" id="CHEBI:64076"/>
    </ligand>
</feature>
<feature type="binding site" evidence="1">
    <location>
        <position position="168"/>
    </location>
    <ligand>
        <name>K(+)</name>
        <dbReference type="ChEBI" id="CHEBI:29103"/>
    </ligand>
</feature>